<reference key="1">
    <citation type="journal article" date="2009" name="J. Bacteriol.">
        <title>Role of conjugative elements in the evolution of the multidrug-resistant pandemic clone Streptococcus pneumoniae Spain23F ST81.</title>
        <authorList>
            <person name="Croucher N.J."/>
            <person name="Walker D."/>
            <person name="Romero P."/>
            <person name="Lennard N."/>
            <person name="Paterson G.K."/>
            <person name="Bason N.C."/>
            <person name="Mitchell A.M."/>
            <person name="Quail M.A."/>
            <person name="Andrew P.W."/>
            <person name="Parkhill J."/>
            <person name="Bentley S.D."/>
            <person name="Mitchell T.J."/>
        </authorList>
    </citation>
    <scope>NUCLEOTIDE SEQUENCE [LARGE SCALE GENOMIC DNA]</scope>
    <source>
        <strain>ATCC 700669 / Spain 23F-1</strain>
    </source>
</reference>
<comment type="function">
    <text evidence="1">Binds directly to 16S ribosomal RNA.</text>
</comment>
<comment type="similarity">
    <text evidence="1">Belongs to the bacterial ribosomal protein bS20 family.</text>
</comment>
<keyword id="KW-0687">Ribonucleoprotein</keyword>
<keyword id="KW-0689">Ribosomal protein</keyword>
<keyword id="KW-0694">RNA-binding</keyword>
<keyword id="KW-0699">rRNA-binding</keyword>
<accession>B8ZNP0</accession>
<organism>
    <name type="scientific">Streptococcus pneumoniae (strain ATCC 700669 / Spain 23F-1)</name>
    <dbReference type="NCBI Taxonomy" id="561276"/>
    <lineage>
        <taxon>Bacteria</taxon>
        <taxon>Bacillati</taxon>
        <taxon>Bacillota</taxon>
        <taxon>Bacilli</taxon>
        <taxon>Lactobacillales</taxon>
        <taxon>Streptococcaceae</taxon>
        <taxon>Streptococcus</taxon>
    </lineage>
</organism>
<name>RS20_STRPJ</name>
<evidence type="ECO:0000255" key="1">
    <source>
        <dbReference type="HAMAP-Rule" id="MF_00500"/>
    </source>
</evidence>
<evidence type="ECO:0000305" key="2"/>
<feature type="chain" id="PRO_1000194266" description="Small ribosomal subunit protein bS20">
    <location>
        <begin position="1"/>
        <end position="78"/>
    </location>
</feature>
<protein>
    <recommendedName>
        <fullName evidence="1">Small ribosomal subunit protein bS20</fullName>
    </recommendedName>
    <alternativeName>
        <fullName evidence="2">30S ribosomal protein S20</fullName>
    </alternativeName>
</protein>
<sequence>MANIKSAIKRAELNVKQNEKNSAQKSAMRTAIKAFEANPSEELFRAASSAIDKAETKGLIHKNKASRDKARLSTKLAK</sequence>
<gene>
    <name evidence="1" type="primary">rpsT</name>
    <name type="ordered locus">SPN23F07590</name>
</gene>
<dbReference type="EMBL" id="FM211187">
    <property type="protein sequence ID" value="CAR68599.1"/>
    <property type="molecule type" value="Genomic_DNA"/>
</dbReference>
<dbReference type="RefSeq" id="WP_001274003.1">
    <property type="nucleotide sequence ID" value="NC_011900.1"/>
</dbReference>
<dbReference type="SMR" id="B8ZNP0"/>
<dbReference type="KEGG" id="sne:SPN23F07590"/>
<dbReference type="HOGENOM" id="CLU_160655_1_1_9"/>
<dbReference type="GO" id="GO:0005829">
    <property type="term" value="C:cytosol"/>
    <property type="evidence" value="ECO:0007669"/>
    <property type="project" value="TreeGrafter"/>
</dbReference>
<dbReference type="GO" id="GO:0015935">
    <property type="term" value="C:small ribosomal subunit"/>
    <property type="evidence" value="ECO:0007669"/>
    <property type="project" value="TreeGrafter"/>
</dbReference>
<dbReference type="GO" id="GO:0070181">
    <property type="term" value="F:small ribosomal subunit rRNA binding"/>
    <property type="evidence" value="ECO:0007669"/>
    <property type="project" value="TreeGrafter"/>
</dbReference>
<dbReference type="GO" id="GO:0003735">
    <property type="term" value="F:structural constituent of ribosome"/>
    <property type="evidence" value="ECO:0007669"/>
    <property type="project" value="InterPro"/>
</dbReference>
<dbReference type="GO" id="GO:0006412">
    <property type="term" value="P:translation"/>
    <property type="evidence" value="ECO:0007669"/>
    <property type="project" value="UniProtKB-UniRule"/>
</dbReference>
<dbReference type="FunFam" id="1.20.58.110:FF:000001">
    <property type="entry name" value="30S ribosomal protein S20"/>
    <property type="match status" value="1"/>
</dbReference>
<dbReference type="Gene3D" id="1.20.58.110">
    <property type="entry name" value="Ribosomal protein S20"/>
    <property type="match status" value="1"/>
</dbReference>
<dbReference type="HAMAP" id="MF_00500">
    <property type="entry name" value="Ribosomal_bS20"/>
    <property type="match status" value="1"/>
</dbReference>
<dbReference type="InterPro" id="IPR002583">
    <property type="entry name" value="Ribosomal_bS20"/>
</dbReference>
<dbReference type="InterPro" id="IPR036510">
    <property type="entry name" value="Ribosomal_bS20_sf"/>
</dbReference>
<dbReference type="NCBIfam" id="TIGR00029">
    <property type="entry name" value="S20"/>
    <property type="match status" value="1"/>
</dbReference>
<dbReference type="PANTHER" id="PTHR33398">
    <property type="entry name" value="30S RIBOSOMAL PROTEIN S20"/>
    <property type="match status" value="1"/>
</dbReference>
<dbReference type="PANTHER" id="PTHR33398:SF1">
    <property type="entry name" value="SMALL RIBOSOMAL SUBUNIT PROTEIN BS20C"/>
    <property type="match status" value="1"/>
</dbReference>
<dbReference type="Pfam" id="PF01649">
    <property type="entry name" value="Ribosomal_S20p"/>
    <property type="match status" value="1"/>
</dbReference>
<dbReference type="SUPFAM" id="SSF46992">
    <property type="entry name" value="Ribosomal protein S20"/>
    <property type="match status" value="1"/>
</dbReference>
<proteinExistence type="inferred from homology"/>